<protein>
    <recommendedName>
        <fullName>B-phycoerythrin alpha chain</fullName>
    </recommendedName>
</protein>
<geneLocation type="chloroplast"/>
<dbReference type="EMBL" id="L02188">
    <property type="protein sequence ID" value="AAB01576.1"/>
    <property type="molecule type" value="Genomic_DNA"/>
</dbReference>
<dbReference type="PIR" id="B47207">
    <property type="entry name" value="B47207"/>
</dbReference>
<dbReference type="RefSeq" id="YP_010330380.1">
    <property type="nucleotide sequence ID" value="NC_062301.1"/>
</dbReference>
<dbReference type="SMR" id="Q02036"/>
<dbReference type="GeneID" id="71712843"/>
<dbReference type="GO" id="GO:0009535">
    <property type="term" value="C:chloroplast thylakoid membrane"/>
    <property type="evidence" value="ECO:0007669"/>
    <property type="project" value="UniProtKB-SubCell"/>
</dbReference>
<dbReference type="GO" id="GO:0030089">
    <property type="term" value="C:phycobilisome"/>
    <property type="evidence" value="ECO:0007669"/>
    <property type="project" value="UniProtKB-KW"/>
</dbReference>
<dbReference type="GO" id="GO:0015979">
    <property type="term" value="P:photosynthesis"/>
    <property type="evidence" value="ECO:0007669"/>
    <property type="project" value="UniProtKB-KW"/>
</dbReference>
<dbReference type="CDD" id="cd14769">
    <property type="entry name" value="PE_alpha"/>
    <property type="match status" value="1"/>
</dbReference>
<dbReference type="Gene3D" id="1.10.490.20">
    <property type="entry name" value="Phycocyanins"/>
    <property type="match status" value="1"/>
</dbReference>
<dbReference type="InterPro" id="IPR009050">
    <property type="entry name" value="Globin-like_sf"/>
</dbReference>
<dbReference type="InterPro" id="IPR012128">
    <property type="entry name" value="Phycobilisome_asu/bsu"/>
</dbReference>
<dbReference type="InterPro" id="IPR038719">
    <property type="entry name" value="Phycobilisome_asu/bsu_sf"/>
</dbReference>
<dbReference type="PANTHER" id="PTHR34011:SF4">
    <property type="entry name" value="C-PHYCOCYANIN ALPHA SUBUNIT"/>
    <property type="match status" value="1"/>
</dbReference>
<dbReference type="PANTHER" id="PTHR34011">
    <property type="entry name" value="PHYCOBILISOME 32.1 KDA LINKER POLYPEPTIDE, PHYCOCYANIN-ASSOCIATED, ROD 2-RELATED"/>
    <property type="match status" value="1"/>
</dbReference>
<dbReference type="Pfam" id="PF00502">
    <property type="entry name" value="Phycobilisome"/>
    <property type="match status" value="1"/>
</dbReference>
<dbReference type="PIRSF" id="PIRSF000081">
    <property type="entry name" value="Phycocyanin"/>
    <property type="match status" value="1"/>
</dbReference>
<dbReference type="SUPFAM" id="SSF46458">
    <property type="entry name" value="Globin-like"/>
    <property type="match status" value="1"/>
</dbReference>
<evidence type="ECO:0000250" key="1"/>
<evidence type="ECO:0000305" key="2"/>
<name>PHEA_RHOVL</name>
<comment type="function">
    <text>Light-harvesting photosynthetic bile pigment-protein from the phycobiliprotein complex.</text>
</comment>
<comment type="subunit">
    <text>Heteromer of 6 alpha, 6 beta and one gamma chain.</text>
</comment>
<comment type="subcellular location">
    <subcellularLocation>
        <location evidence="1">Plastid</location>
        <location evidence="1">Chloroplast thylakoid membrane</location>
        <topology evidence="1">Peripheral membrane protein</topology>
        <orientation evidence="1">Stromal side</orientation>
    </subcellularLocation>
    <text evidence="1">Forms the periphery of the phycobilisome rod.</text>
</comment>
<comment type="PTM">
    <text evidence="1">Contains two covalently linked bilin chromophores.</text>
</comment>
<comment type="similarity">
    <text evidence="2">Belongs to the phycobiliprotein family.</text>
</comment>
<reference key="1">
    <citation type="journal article" date="1992" name="Proc. Natl. Acad. Sci. U.S.A.">
        <title>Characterization of the genes encoding phycoerythrin in the red alga Rhodella violacea: evidence for a splitting of the rpeB gene by an intron.</title>
        <authorList>
            <person name="Bernard C."/>
            <person name="Thomas J.C."/>
            <person name="Mazel D."/>
            <person name="Mousseau A."/>
            <person name="Castets A.M."/>
            <person name="Tandeau de Marsac N."/>
            <person name="Dubacq J.P."/>
        </authorList>
    </citation>
    <scope>NUCLEOTIDE SEQUENCE [GENOMIC DNA]</scope>
</reference>
<feature type="chain" id="PRO_0000199182" description="B-phycoerythrin alpha chain">
    <location>
        <begin position="1"/>
        <end position="164"/>
    </location>
</feature>
<feature type="binding site" description="covalent" evidence="1">
    <location>
        <position position="82"/>
    </location>
    <ligand>
        <name>(2R,3E)-phycoerythrobilin</name>
        <dbReference type="ChEBI" id="CHEBI:85276"/>
        <label>1</label>
    </ligand>
</feature>
<feature type="binding site" description="covalent" evidence="1">
    <location>
        <position position="139"/>
    </location>
    <ligand>
        <name>(2R,3E)-phycoerythrobilin</name>
        <dbReference type="ChEBI" id="CHEBI:85276"/>
        <label>2</label>
    </ligand>
</feature>
<organism>
    <name type="scientific">Rhodella violacea</name>
    <name type="common">Red alga</name>
    <dbReference type="NCBI Taxonomy" id="2801"/>
    <lineage>
        <taxon>Eukaryota</taxon>
        <taxon>Rhodophyta</taxon>
        <taxon>Rhodellophyceae</taxon>
        <taxon>Rhodellales</taxon>
        <taxon>Rhodellaceae</taxon>
        <taxon>Rhodella</taxon>
    </lineage>
</organism>
<accession>Q02036</accession>
<gene>
    <name type="primary">cpeA</name>
    <name type="synonym">rpeA</name>
</gene>
<sequence>MKSVITTVISAADAAGRFPTASDLESVQGNIQRASARLEAAEKLAGNYEAVVKEAGDACFAKYAYLKNAGEAGDSQEKINKCYRDVDHYMRLINYCLVVGGTGPVDEWGIAGAREVYRTLNLPTASYVAAFAFARNRLCCPRDMSAQAGVEYAAYLDYVINALS</sequence>
<proteinExistence type="inferred from homology"/>
<keyword id="KW-0042">Antenna complex</keyword>
<keyword id="KW-0089">Bile pigment</keyword>
<keyword id="KW-0150">Chloroplast</keyword>
<keyword id="KW-0157">Chromophore</keyword>
<keyword id="KW-0249">Electron transport</keyword>
<keyword id="KW-0472">Membrane</keyword>
<keyword id="KW-0602">Photosynthesis</keyword>
<keyword id="KW-0605">Phycobilisome</keyword>
<keyword id="KW-0934">Plastid</keyword>
<keyword id="KW-0793">Thylakoid</keyword>
<keyword id="KW-0813">Transport</keyword>